<proteinExistence type="inferred from homology"/>
<evidence type="ECO:0000255" key="1">
    <source>
        <dbReference type="HAMAP-Rule" id="MF_01322"/>
    </source>
</evidence>
<reference key="1">
    <citation type="journal article" date="2005" name="Proc. Natl. Acad. Sci. U.S.A.">
        <title>The complete genome sequence of Mycobacterium avium subspecies paratuberculosis.</title>
        <authorList>
            <person name="Li L."/>
            <person name="Bannantine J.P."/>
            <person name="Zhang Q."/>
            <person name="Amonsin A."/>
            <person name="May B.J."/>
            <person name="Alt D."/>
            <person name="Banerji N."/>
            <person name="Kanjilal S."/>
            <person name="Kapur V."/>
        </authorList>
    </citation>
    <scope>NUCLEOTIDE SEQUENCE [LARGE SCALE GENOMIC DNA]</scope>
    <source>
        <strain>ATCC BAA-968 / K-10</strain>
    </source>
</reference>
<accession>Q73SE3</accession>
<name>RPOC_MYCPA</name>
<organism>
    <name type="scientific">Mycolicibacterium paratuberculosis (strain ATCC BAA-968 / K-10)</name>
    <name type="common">Mycobacterium paratuberculosis</name>
    <dbReference type="NCBI Taxonomy" id="262316"/>
    <lineage>
        <taxon>Bacteria</taxon>
        <taxon>Bacillati</taxon>
        <taxon>Actinomycetota</taxon>
        <taxon>Actinomycetes</taxon>
        <taxon>Mycobacteriales</taxon>
        <taxon>Mycobacteriaceae</taxon>
        <taxon>Mycobacterium</taxon>
        <taxon>Mycobacterium avium complex (MAC)</taxon>
    </lineage>
</organism>
<gene>
    <name evidence="1" type="primary">rpoC</name>
    <name type="ordered locus">MAP_4131</name>
</gene>
<dbReference type="EC" id="2.7.7.6" evidence="1"/>
<dbReference type="EMBL" id="AE016958">
    <property type="protein sequence ID" value="AAS06681.1"/>
    <property type="molecule type" value="Genomic_DNA"/>
</dbReference>
<dbReference type="RefSeq" id="WP_003873550.1">
    <property type="nucleotide sequence ID" value="NZ_CP106873.1"/>
</dbReference>
<dbReference type="SMR" id="Q73SE3"/>
<dbReference type="STRING" id="262316.MAP_4131"/>
<dbReference type="KEGG" id="mpa:MAP_4131"/>
<dbReference type="eggNOG" id="COG0086">
    <property type="taxonomic scope" value="Bacteria"/>
</dbReference>
<dbReference type="HOGENOM" id="CLU_000524_3_0_11"/>
<dbReference type="Proteomes" id="UP000000580">
    <property type="component" value="Chromosome"/>
</dbReference>
<dbReference type="GO" id="GO:0000428">
    <property type="term" value="C:DNA-directed RNA polymerase complex"/>
    <property type="evidence" value="ECO:0007669"/>
    <property type="project" value="UniProtKB-KW"/>
</dbReference>
<dbReference type="GO" id="GO:0003677">
    <property type="term" value="F:DNA binding"/>
    <property type="evidence" value="ECO:0007669"/>
    <property type="project" value="UniProtKB-UniRule"/>
</dbReference>
<dbReference type="GO" id="GO:0003899">
    <property type="term" value="F:DNA-directed RNA polymerase activity"/>
    <property type="evidence" value="ECO:0007669"/>
    <property type="project" value="UniProtKB-UniRule"/>
</dbReference>
<dbReference type="GO" id="GO:0000287">
    <property type="term" value="F:magnesium ion binding"/>
    <property type="evidence" value="ECO:0007669"/>
    <property type="project" value="UniProtKB-UniRule"/>
</dbReference>
<dbReference type="GO" id="GO:0008270">
    <property type="term" value="F:zinc ion binding"/>
    <property type="evidence" value="ECO:0007669"/>
    <property type="project" value="UniProtKB-UniRule"/>
</dbReference>
<dbReference type="GO" id="GO:0006351">
    <property type="term" value="P:DNA-templated transcription"/>
    <property type="evidence" value="ECO:0007669"/>
    <property type="project" value="UniProtKB-UniRule"/>
</dbReference>
<dbReference type="CDD" id="cd02655">
    <property type="entry name" value="RNAP_beta'_C"/>
    <property type="match status" value="1"/>
</dbReference>
<dbReference type="CDD" id="cd01609">
    <property type="entry name" value="RNAP_beta'_N"/>
    <property type="match status" value="1"/>
</dbReference>
<dbReference type="FunFam" id="1.10.132.30:FF:000003">
    <property type="entry name" value="DNA-directed RNA polymerase subunit beta"/>
    <property type="match status" value="1"/>
</dbReference>
<dbReference type="FunFam" id="1.10.150.390:FF:000002">
    <property type="entry name" value="DNA-directed RNA polymerase subunit beta"/>
    <property type="match status" value="1"/>
</dbReference>
<dbReference type="FunFam" id="1.10.274.100:FF:000009">
    <property type="entry name" value="DNA-directed RNA polymerase subunit beta"/>
    <property type="match status" value="1"/>
</dbReference>
<dbReference type="FunFam" id="1.10.40.90:FF:000001">
    <property type="entry name" value="DNA-directed RNA polymerase subunit beta"/>
    <property type="match status" value="1"/>
</dbReference>
<dbReference type="FunFam" id="4.10.860.120:FF:000001">
    <property type="entry name" value="DNA-directed RNA polymerase subunit beta"/>
    <property type="match status" value="1"/>
</dbReference>
<dbReference type="Gene3D" id="1.10.132.30">
    <property type="match status" value="1"/>
</dbReference>
<dbReference type="Gene3D" id="1.10.150.390">
    <property type="match status" value="1"/>
</dbReference>
<dbReference type="Gene3D" id="1.10.1790.20">
    <property type="match status" value="1"/>
</dbReference>
<dbReference type="Gene3D" id="1.10.40.90">
    <property type="match status" value="1"/>
</dbReference>
<dbReference type="Gene3D" id="2.40.40.20">
    <property type="match status" value="1"/>
</dbReference>
<dbReference type="Gene3D" id="2.40.50.100">
    <property type="match status" value="1"/>
</dbReference>
<dbReference type="Gene3D" id="4.10.860.120">
    <property type="entry name" value="RNA polymerase II, clamp domain"/>
    <property type="match status" value="1"/>
</dbReference>
<dbReference type="Gene3D" id="1.10.274.100">
    <property type="entry name" value="RNA polymerase Rpb1, domain 3"/>
    <property type="match status" value="1"/>
</dbReference>
<dbReference type="HAMAP" id="MF_01322">
    <property type="entry name" value="RNApol_bact_RpoC"/>
    <property type="match status" value="1"/>
</dbReference>
<dbReference type="InterPro" id="IPR045867">
    <property type="entry name" value="DNA-dir_RpoC_beta_prime"/>
</dbReference>
<dbReference type="InterPro" id="IPR012754">
    <property type="entry name" value="DNA-dir_RpoC_beta_prime_bact"/>
</dbReference>
<dbReference type="InterPro" id="IPR000722">
    <property type="entry name" value="RNA_pol_asu"/>
</dbReference>
<dbReference type="InterPro" id="IPR006592">
    <property type="entry name" value="RNA_pol_N"/>
</dbReference>
<dbReference type="InterPro" id="IPR007080">
    <property type="entry name" value="RNA_pol_Rpb1_1"/>
</dbReference>
<dbReference type="InterPro" id="IPR007066">
    <property type="entry name" value="RNA_pol_Rpb1_3"/>
</dbReference>
<dbReference type="InterPro" id="IPR042102">
    <property type="entry name" value="RNA_pol_Rpb1_3_sf"/>
</dbReference>
<dbReference type="InterPro" id="IPR007083">
    <property type="entry name" value="RNA_pol_Rpb1_4"/>
</dbReference>
<dbReference type="InterPro" id="IPR007081">
    <property type="entry name" value="RNA_pol_Rpb1_5"/>
</dbReference>
<dbReference type="InterPro" id="IPR044893">
    <property type="entry name" value="RNA_pol_Rpb1_clamp_domain"/>
</dbReference>
<dbReference type="InterPro" id="IPR038120">
    <property type="entry name" value="Rpb1_funnel_sf"/>
</dbReference>
<dbReference type="NCBIfam" id="NF011498">
    <property type="entry name" value="PRK14906.1"/>
    <property type="match status" value="1"/>
</dbReference>
<dbReference type="NCBIfam" id="TIGR02386">
    <property type="entry name" value="rpoC_TIGR"/>
    <property type="match status" value="1"/>
</dbReference>
<dbReference type="PANTHER" id="PTHR19376">
    <property type="entry name" value="DNA-DIRECTED RNA POLYMERASE"/>
    <property type="match status" value="1"/>
</dbReference>
<dbReference type="PANTHER" id="PTHR19376:SF54">
    <property type="entry name" value="DNA-DIRECTED RNA POLYMERASE SUBUNIT BETA"/>
    <property type="match status" value="1"/>
</dbReference>
<dbReference type="Pfam" id="PF04997">
    <property type="entry name" value="RNA_pol_Rpb1_1"/>
    <property type="match status" value="1"/>
</dbReference>
<dbReference type="Pfam" id="PF00623">
    <property type="entry name" value="RNA_pol_Rpb1_2"/>
    <property type="match status" value="1"/>
</dbReference>
<dbReference type="Pfam" id="PF04983">
    <property type="entry name" value="RNA_pol_Rpb1_3"/>
    <property type="match status" value="1"/>
</dbReference>
<dbReference type="Pfam" id="PF05000">
    <property type="entry name" value="RNA_pol_Rpb1_4"/>
    <property type="match status" value="1"/>
</dbReference>
<dbReference type="Pfam" id="PF04998">
    <property type="entry name" value="RNA_pol_Rpb1_5"/>
    <property type="match status" value="1"/>
</dbReference>
<dbReference type="SMART" id="SM00663">
    <property type="entry name" value="RPOLA_N"/>
    <property type="match status" value="1"/>
</dbReference>
<dbReference type="SUPFAM" id="SSF64484">
    <property type="entry name" value="beta and beta-prime subunits of DNA dependent RNA-polymerase"/>
    <property type="match status" value="1"/>
</dbReference>
<comment type="function">
    <text evidence="1">DNA-dependent RNA polymerase catalyzes the transcription of DNA into RNA using the four ribonucleoside triphosphates as substrates.</text>
</comment>
<comment type="catalytic activity">
    <reaction evidence="1">
        <text>RNA(n) + a ribonucleoside 5'-triphosphate = RNA(n+1) + diphosphate</text>
        <dbReference type="Rhea" id="RHEA:21248"/>
        <dbReference type="Rhea" id="RHEA-COMP:14527"/>
        <dbReference type="Rhea" id="RHEA-COMP:17342"/>
        <dbReference type="ChEBI" id="CHEBI:33019"/>
        <dbReference type="ChEBI" id="CHEBI:61557"/>
        <dbReference type="ChEBI" id="CHEBI:140395"/>
        <dbReference type="EC" id="2.7.7.6"/>
    </reaction>
</comment>
<comment type="cofactor">
    <cofactor evidence="1">
        <name>Mg(2+)</name>
        <dbReference type="ChEBI" id="CHEBI:18420"/>
    </cofactor>
    <text evidence="1">Binds 1 Mg(2+) ion per subunit.</text>
</comment>
<comment type="cofactor">
    <cofactor evidence="1">
        <name>Zn(2+)</name>
        <dbReference type="ChEBI" id="CHEBI:29105"/>
    </cofactor>
    <text evidence="1">Binds 2 Zn(2+) ions per subunit.</text>
</comment>
<comment type="subunit">
    <text evidence="1">The RNAP catalytic core consists of 2 alpha, 1 beta, 1 beta' and 1 omega subunit. When a sigma factor is associated with the core the holoenzyme is formed, which can initiate transcription.</text>
</comment>
<comment type="similarity">
    <text evidence="1">Belongs to the RNA polymerase beta' chain family.</text>
</comment>
<keyword id="KW-0240">DNA-directed RNA polymerase</keyword>
<keyword id="KW-0460">Magnesium</keyword>
<keyword id="KW-0479">Metal-binding</keyword>
<keyword id="KW-0548">Nucleotidyltransferase</keyword>
<keyword id="KW-1185">Reference proteome</keyword>
<keyword id="KW-0804">Transcription</keyword>
<keyword id="KW-0808">Transferase</keyword>
<keyword id="KW-0862">Zinc</keyword>
<sequence>MLDVNFFDELRIGLATAEDIRQWSYGEVKKPETINYRTLKPEKDGLFCEKIFGPTRDWECYCGKYKRVRFKGIICERCGVEVTRAKVRRERMGHIELAAPVTHIWYFKGVPSRLGYLLDLAPKDLEKIIYFAAYVITSVDEEMRHNELSTLEAEMMVERKAVEDQRDADLEARAQKLEADLAELEAEGAKADARRKVRDSGEREMRQIRDRAQRELDRLEDIWNTFTKLAPKQLIVDENLYRELVDRYGEYFTGAMGAESIQKLIENFDIDAEAEQLRDVIRNGKGQKKLRALKRLKVVAAFQQSGNSPMGMVLDAVPVIPPELRPMVQLDGGRFATSDLNDLYRRVINRNNRLKRLIDLGAPEIIVNNEKRMLQESVDALFDNGRRGRPVTGPGNRPLKSLSDLLKGKQGRFRQNLLGKRVDYSGRSVIVVGPQLKLHQCGLPKLMALELFKPFVMKRLVDLNHAQNIKSAKRMVERQRPQVWDVLEEVIAEHPVLLNRAPTLHRLGIQAFEPMLVEGKAIQLHPLVCEAFNADFDGDQMAVHLPLSAEAQAEARILMLSSNNILSPASGRPLAMPRLDMVTGLYYLTTEVEGDKGEYSPAAKDRPETGVYSSPAEAIMAADRGVLSVRAKIKVRLTQLRPPAEIEAELFGANGWQPGDAWMAETTLGRVLFNELLPVGYPFVNKQMHKKVQASIINDLAERYPMIVVAQTVDKLKDAGFYWATRSGVTVSMADVLVPPRKKEILDQYEERAEKVEKQFQRGALNHDERNEALVEIWKEATDEVGQALREHYPADNPIITIVDSGATGNFTQTRTLAGMKGLVTNPKGEFIPRPVKSSFREGLTVLEYFINTHGARKGLADTALRTADSGYLTRRLVDVSQDVIVREHDCETERGIVVELAERQPDGTLIRDPYIETSAYARTLGTDAVDEAGNVIVARGEDLGDPEIDALLAAGITSVKVRSVLTCTTGTGVCATCYGRSMATGKLVDIGEAVGIVAAQSIGEPGTQLTMRTFHQGGVGEDITGGLPRVQELFEARIPRGKAPIADVTGRVRLEDGERFYKITIVPDDGSEEVVYDKLSKRQRLRVFKHEDGSERVLSDGDHVEVGQQLMEGSADPHEVLRVQGPREVQIHLVREVQEVYRAQGVSIHDKHIEVIVRQMLRRVTIIDSGSTEFLPGSLIDRAEFEAENRRVVAEGGEPAAGRPVLMGITKASLATDSWLSAASFQETTRVLTDAAINCRSDKLNGLKENVIIGKLIPAGTGINRYRNIQVQPTEEARAAAYTIPSYEDQYYSPDFGQATGAAVPLDDYGYSDYR</sequence>
<feature type="chain" id="PRO_0000067761" description="DNA-directed RNA polymerase subunit beta'">
    <location>
        <begin position="1"/>
        <end position="1316"/>
    </location>
</feature>
<feature type="binding site" evidence="1">
    <location>
        <position position="60"/>
    </location>
    <ligand>
        <name>Zn(2+)</name>
        <dbReference type="ChEBI" id="CHEBI:29105"/>
        <label>1</label>
    </ligand>
</feature>
<feature type="binding site" evidence="1">
    <location>
        <position position="62"/>
    </location>
    <ligand>
        <name>Zn(2+)</name>
        <dbReference type="ChEBI" id="CHEBI:29105"/>
        <label>1</label>
    </ligand>
</feature>
<feature type="binding site" evidence="1">
    <location>
        <position position="75"/>
    </location>
    <ligand>
        <name>Zn(2+)</name>
        <dbReference type="ChEBI" id="CHEBI:29105"/>
        <label>1</label>
    </ligand>
</feature>
<feature type="binding site" evidence="1">
    <location>
        <position position="78"/>
    </location>
    <ligand>
        <name>Zn(2+)</name>
        <dbReference type="ChEBI" id="CHEBI:29105"/>
        <label>1</label>
    </ligand>
</feature>
<feature type="binding site" evidence="1">
    <location>
        <position position="535"/>
    </location>
    <ligand>
        <name>Mg(2+)</name>
        <dbReference type="ChEBI" id="CHEBI:18420"/>
    </ligand>
</feature>
<feature type="binding site" evidence="1">
    <location>
        <position position="537"/>
    </location>
    <ligand>
        <name>Mg(2+)</name>
        <dbReference type="ChEBI" id="CHEBI:18420"/>
    </ligand>
</feature>
<feature type="binding site" evidence="1">
    <location>
        <position position="539"/>
    </location>
    <ligand>
        <name>Mg(2+)</name>
        <dbReference type="ChEBI" id="CHEBI:18420"/>
    </ligand>
</feature>
<feature type="binding site" evidence="1">
    <location>
        <position position="891"/>
    </location>
    <ligand>
        <name>Zn(2+)</name>
        <dbReference type="ChEBI" id="CHEBI:29105"/>
        <label>2</label>
    </ligand>
</feature>
<feature type="binding site" evidence="1">
    <location>
        <position position="968"/>
    </location>
    <ligand>
        <name>Zn(2+)</name>
        <dbReference type="ChEBI" id="CHEBI:29105"/>
        <label>2</label>
    </ligand>
</feature>
<feature type="binding site" evidence="1">
    <location>
        <position position="975"/>
    </location>
    <ligand>
        <name>Zn(2+)</name>
        <dbReference type="ChEBI" id="CHEBI:29105"/>
        <label>2</label>
    </ligand>
</feature>
<feature type="binding site" evidence="1">
    <location>
        <position position="978"/>
    </location>
    <ligand>
        <name>Zn(2+)</name>
        <dbReference type="ChEBI" id="CHEBI:29105"/>
        <label>2</label>
    </ligand>
</feature>
<protein>
    <recommendedName>
        <fullName evidence="1">DNA-directed RNA polymerase subunit beta'</fullName>
        <shortName evidence="1">RNAP subunit beta'</shortName>
        <ecNumber evidence="1">2.7.7.6</ecNumber>
    </recommendedName>
    <alternativeName>
        <fullName evidence="1">RNA polymerase subunit beta'</fullName>
    </alternativeName>
    <alternativeName>
        <fullName evidence="1">Transcriptase subunit beta'</fullName>
    </alternativeName>
</protein>